<name>36021_ASFP4</name>
<organismHost>
    <name type="scientific">Ornithodoros</name>
    <name type="common">relapsing fever ticks</name>
    <dbReference type="NCBI Taxonomy" id="6937"/>
</organismHost>
<organismHost>
    <name type="scientific">Phacochoerus aethiopicus</name>
    <name type="common">Warthog</name>
    <dbReference type="NCBI Taxonomy" id="85517"/>
</organismHost>
<organismHost>
    <name type="scientific">Phacochoerus africanus</name>
    <name type="common">Warthog</name>
    <dbReference type="NCBI Taxonomy" id="41426"/>
</organismHost>
<organismHost>
    <name type="scientific">Potamochoerus larvatus</name>
    <name type="common">Bushpig</name>
    <dbReference type="NCBI Taxonomy" id="273792"/>
</organismHost>
<organismHost>
    <name type="scientific">Sus scrofa</name>
    <name type="common">Pig</name>
    <dbReference type="NCBI Taxonomy" id="9823"/>
</organismHost>
<comment type="function">
    <text evidence="1">Plays a role in virus cell tropism, and may be required for efficient virus replication in macrophages.</text>
</comment>
<comment type="similarity">
    <text evidence="2">Belongs to the asfivirus MGF 360 family.</text>
</comment>
<proteinExistence type="inferred from homology"/>
<protein>
    <recommendedName>
        <fullName>Protein MGF 360-21R</fullName>
    </recommendedName>
</protein>
<accession>P0C9S2</accession>
<organism>
    <name type="scientific">African swine fever virus (isolate Tick/South Africa/Pretoriuskop Pr4/1996)</name>
    <name type="common">ASFV</name>
    <dbReference type="NCBI Taxonomy" id="561443"/>
    <lineage>
        <taxon>Viruses</taxon>
        <taxon>Varidnaviria</taxon>
        <taxon>Bamfordvirae</taxon>
        <taxon>Nucleocytoviricota</taxon>
        <taxon>Pokkesviricetes</taxon>
        <taxon>Asfuvirales</taxon>
        <taxon>Asfarviridae</taxon>
        <taxon>Asfivirus</taxon>
        <taxon>African swine fever virus</taxon>
    </lineage>
</organism>
<sequence length="364" mass="42210">MPSPHSLQTLAKKILATQQISTDHYFILKYCGLWWHGAPIMLSTNEDNQLMIKSASFKEGLSLDLALMKVVQENNHDLIKLFTEWGADINSSFVTVNMECTRNLCRELGAKEALNERDILQIFYKTRDIKTSSHVILCHELLSNNPLFQNIERMRSIIYRSLEKLSINFILDDISFSEMLTRHWYGLAILYNLTEAIQYFYEKYKHFKNWRLICGLSFNNLSDLYEIYNLEKVDMNIDEMMYLACSIYDGNYSTIYYCFVLGADINQAMLTSVINHCIGNLFLCIDLGADAFEDSMELAKQKNDNIFISILSFKNYSPDSSLLSLKMTDPEKINALLDEEKYESKNMLMFDAHDEKTSTSPVRL</sequence>
<gene>
    <name type="ordered locus">Pret-175</name>
</gene>
<dbReference type="EMBL" id="AY261363">
    <property type="status" value="NOT_ANNOTATED_CDS"/>
    <property type="molecule type" value="Genomic_DNA"/>
</dbReference>
<dbReference type="SMR" id="P0C9S2"/>
<dbReference type="Proteomes" id="UP000000859">
    <property type="component" value="Segment"/>
</dbReference>
<dbReference type="GO" id="GO:0042330">
    <property type="term" value="P:taxis"/>
    <property type="evidence" value="ECO:0007669"/>
    <property type="project" value="InterPro"/>
</dbReference>
<dbReference type="InterPro" id="IPR002595">
    <property type="entry name" value="ASFV_MGF360"/>
</dbReference>
<dbReference type="Pfam" id="PF01671">
    <property type="entry name" value="ASFV_360"/>
    <property type="match status" value="1"/>
</dbReference>
<evidence type="ECO:0000250" key="1"/>
<evidence type="ECO:0000305" key="2"/>
<feature type="chain" id="PRO_0000373310" description="Protein MGF 360-21R">
    <location>
        <begin position="1"/>
        <end position="364"/>
    </location>
</feature>
<reference key="1">
    <citation type="submission" date="2003-03" db="EMBL/GenBank/DDBJ databases">
        <title>African swine fever virus genomes.</title>
        <authorList>
            <person name="Kutish G.F."/>
            <person name="Rock D.L."/>
        </authorList>
    </citation>
    <scope>NUCLEOTIDE SEQUENCE [LARGE SCALE GENOMIC DNA]</scope>
</reference>